<organism>
    <name type="scientific">Escherichia coli O157:H7</name>
    <dbReference type="NCBI Taxonomy" id="83334"/>
    <lineage>
        <taxon>Bacteria</taxon>
        <taxon>Pseudomonadati</taxon>
        <taxon>Pseudomonadota</taxon>
        <taxon>Gammaproteobacteria</taxon>
        <taxon>Enterobacterales</taxon>
        <taxon>Enterobacteriaceae</taxon>
        <taxon>Escherichia</taxon>
    </lineage>
</organism>
<accession>Q8XAY7</accession>
<accession>Q7ADZ7</accession>
<proteinExistence type="inferred from homology"/>
<sequence length="511" mass="55686">MQTSDTRALPLLCARSVYKQYSGVNVLKGIDFTLHQGEVHALLGGNGAGKSTLMKIIAGITSADSGTLEIGGNNYARLTPVHAHQLGIYLVPQEPLLFPSLSIKENILFGLAKKQLSMQKMKNLLAALGCQFDLHSLAGSLDVADRQMVEILRGLMRDSRILILDEPTASLTPAETERLFTRLQELLATGVGIVFISHKLPEIRQIADRISVMRDGTIALSGKTSELSTDDIIQAITPAVREKSLSASQKLWLELPGNRPQHAAGTSVLTLENLTGEGFRNVSLTLNAGEILGLAGLVGAGRTELAETLYGLRTLRGGRIMLNDKEINRLSTGERLLRGLVYLPEDRQSSGLNLDASLAWNVCALTHNLRGFWAKTAKDNATLELYRRALNIKYNQPEQAARTLSGGNQQKILIAKCLEASPQVLIVDEPTRGVDVSARNDIYQLLRSIAAQNVAVLLISSDLEEIELMADRVYVMHQGEITHSALTGRDINVETIMRVAFGDSQRQEAAC</sequence>
<feature type="chain" id="PRO_0000351294" description="Autoinducer 2 import ATP-binding protein LsrA">
    <location>
        <begin position="1"/>
        <end position="511"/>
    </location>
</feature>
<feature type="domain" description="ABC transporter 1" evidence="2">
    <location>
        <begin position="12"/>
        <end position="240"/>
    </location>
</feature>
<feature type="domain" description="ABC transporter 2" evidence="2">
    <location>
        <begin position="240"/>
        <end position="503"/>
    </location>
</feature>
<feature type="binding site" evidence="2">
    <location>
        <begin position="44"/>
        <end position="51"/>
    </location>
    <ligand>
        <name>ATP</name>
        <dbReference type="ChEBI" id="CHEBI:30616"/>
    </ligand>
</feature>
<comment type="function">
    <text evidence="1">Part of the ABC transporter complex LsrABCD involved in autoinducer 2 (AI-2) import. Responsible for energy coupling to the transport system.</text>
</comment>
<comment type="catalytic activity">
    <reaction evidence="1">
        <text>ATP + H2O + (2R,4S)-2-methyl-2,3,3,4-tetrahydroxytetrahydrofuran-[AI-2-binding protein]Side 1 = ADP + phosphate + (2R,4S)-2-methyl-2,3,3,4-tetrahydroxytetrahydrofuranSide 2 + [AI-2-binding protein]Side 1.</text>
        <dbReference type="EC" id="7.6.2.13"/>
    </reaction>
</comment>
<comment type="subunit">
    <text evidence="1">The complex is composed of two ATP-binding proteins (LsrA), two transmembrane proteins (LsrC and LsrD) and a solute-binding protein (LsrB).</text>
</comment>
<comment type="subcellular location">
    <subcellularLocation>
        <location evidence="1">Cell inner membrane</location>
        <topology evidence="1">Peripheral membrane protein</topology>
    </subcellularLocation>
</comment>
<comment type="similarity">
    <text evidence="3">Belongs to the ABC transporter superfamily. AI-2 autoinducer porter (TC 3.A.1.2.8) family.</text>
</comment>
<name>LSRA_ECO57</name>
<evidence type="ECO:0000250" key="1">
    <source>
        <dbReference type="UniProtKB" id="P77257"/>
    </source>
</evidence>
<evidence type="ECO:0000255" key="2">
    <source>
        <dbReference type="PROSITE-ProRule" id="PRU00434"/>
    </source>
</evidence>
<evidence type="ECO:0000305" key="3"/>
<keyword id="KW-0067">ATP-binding</keyword>
<keyword id="KW-0997">Cell inner membrane</keyword>
<keyword id="KW-1003">Cell membrane</keyword>
<keyword id="KW-0472">Membrane</keyword>
<keyword id="KW-0547">Nucleotide-binding</keyword>
<keyword id="KW-1185">Reference proteome</keyword>
<keyword id="KW-0677">Repeat</keyword>
<keyword id="KW-1278">Translocase</keyword>
<keyword id="KW-0813">Transport</keyword>
<protein>
    <recommendedName>
        <fullName evidence="1">Autoinducer 2 import ATP-binding protein LsrA</fullName>
        <shortName evidence="1">AI-2 import ATP-binding protein LsrA</shortName>
        <ecNumber evidence="1">7.6.2.13</ecNumber>
    </recommendedName>
</protein>
<dbReference type="EC" id="7.6.2.13" evidence="1"/>
<dbReference type="EMBL" id="AE005174">
    <property type="protein sequence ID" value="AAG56253.1"/>
    <property type="molecule type" value="Genomic_DNA"/>
</dbReference>
<dbReference type="EMBL" id="BA000007">
    <property type="protein sequence ID" value="BAB35543.1"/>
    <property type="molecule type" value="Genomic_DNA"/>
</dbReference>
<dbReference type="PIR" id="A85724">
    <property type="entry name" value="A85724"/>
</dbReference>
<dbReference type="PIR" id="H90893">
    <property type="entry name" value="H90893"/>
</dbReference>
<dbReference type="RefSeq" id="NP_310147.1">
    <property type="nucleotide sequence ID" value="NC_002695.1"/>
</dbReference>
<dbReference type="RefSeq" id="WP_001194917.1">
    <property type="nucleotide sequence ID" value="NZ_VOAI01000024.1"/>
</dbReference>
<dbReference type="SMR" id="Q8XAY7"/>
<dbReference type="STRING" id="155864.Z2192"/>
<dbReference type="GeneID" id="917319"/>
<dbReference type="KEGG" id="ece:Z2192"/>
<dbReference type="KEGG" id="ecs:ECs_2120"/>
<dbReference type="PATRIC" id="fig|386585.9.peg.2226"/>
<dbReference type="eggNOG" id="COG1129">
    <property type="taxonomic scope" value="Bacteria"/>
</dbReference>
<dbReference type="HOGENOM" id="CLU_000604_92_3_6"/>
<dbReference type="OMA" id="PQDRHKH"/>
<dbReference type="Proteomes" id="UP000000558">
    <property type="component" value="Chromosome"/>
</dbReference>
<dbReference type="Proteomes" id="UP000002519">
    <property type="component" value="Chromosome"/>
</dbReference>
<dbReference type="GO" id="GO:0005886">
    <property type="term" value="C:plasma membrane"/>
    <property type="evidence" value="ECO:0007669"/>
    <property type="project" value="UniProtKB-SubCell"/>
</dbReference>
<dbReference type="GO" id="GO:0005524">
    <property type="term" value="F:ATP binding"/>
    <property type="evidence" value="ECO:0007669"/>
    <property type="project" value="UniProtKB-KW"/>
</dbReference>
<dbReference type="GO" id="GO:0016887">
    <property type="term" value="F:ATP hydrolysis activity"/>
    <property type="evidence" value="ECO:0007669"/>
    <property type="project" value="InterPro"/>
</dbReference>
<dbReference type="CDD" id="cd03216">
    <property type="entry name" value="ABC_Carb_Monos_I"/>
    <property type="match status" value="1"/>
</dbReference>
<dbReference type="CDD" id="cd03215">
    <property type="entry name" value="ABC_Carb_Monos_II"/>
    <property type="match status" value="1"/>
</dbReference>
<dbReference type="Gene3D" id="3.40.50.300">
    <property type="entry name" value="P-loop containing nucleotide triphosphate hydrolases"/>
    <property type="match status" value="2"/>
</dbReference>
<dbReference type="InterPro" id="IPR003593">
    <property type="entry name" value="AAA+_ATPase"/>
</dbReference>
<dbReference type="InterPro" id="IPR050107">
    <property type="entry name" value="ABC_carbohydrate_import_ATPase"/>
</dbReference>
<dbReference type="InterPro" id="IPR003439">
    <property type="entry name" value="ABC_transporter-like_ATP-bd"/>
</dbReference>
<dbReference type="InterPro" id="IPR017871">
    <property type="entry name" value="ABC_transporter-like_CS"/>
</dbReference>
<dbReference type="InterPro" id="IPR027417">
    <property type="entry name" value="P-loop_NTPase"/>
</dbReference>
<dbReference type="NCBIfam" id="NF011967">
    <property type="entry name" value="PRK15439.1"/>
    <property type="match status" value="1"/>
</dbReference>
<dbReference type="PANTHER" id="PTHR43790:SF2">
    <property type="entry name" value="AUTOINDUCER 2 IMPORT ATP-BINDING PROTEIN LSRA"/>
    <property type="match status" value="1"/>
</dbReference>
<dbReference type="PANTHER" id="PTHR43790">
    <property type="entry name" value="CARBOHYDRATE TRANSPORT ATP-BINDING PROTEIN MG119-RELATED"/>
    <property type="match status" value="1"/>
</dbReference>
<dbReference type="Pfam" id="PF00005">
    <property type="entry name" value="ABC_tran"/>
    <property type="match status" value="2"/>
</dbReference>
<dbReference type="SMART" id="SM00382">
    <property type="entry name" value="AAA"/>
    <property type="match status" value="2"/>
</dbReference>
<dbReference type="SUPFAM" id="SSF52540">
    <property type="entry name" value="P-loop containing nucleoside triphosphate hydrolases"/>
    <property type="match status" value="2"/>
</dbReference>
<dbReference type="PROSITE" id="PS00211">
    <property type="entry name" value="ABC_TRANSPORTER_1"/>
    <property type="match status" value="1"/>
</dbReference>
<dbReference type="PROSITE" id="PS50893">
    <property type="entry name" value="ABC_TRANSPORTER_2"/>
    <property type="match status" value="2"/>
</dbReference>
<gene>
    <name type="primary">lsrA</name>
    <name type="ordered locus">Z2192</name>
    <name type="ordered locus">ECs2120</name>
</gene>
<reference key="1">
    <citation type="journal article" date="2001" name="Nature">
        <title>Genome sequence of enterohaemorrhagic Escherichia coli O157:H7.</title>
        <authorList>
            <person name="Perna N.T."/>
            <person name="Plunkett G. III"/>
            <person name="Burland V."/>
            <person name="Mau B."/>
            <person name="Glasner J.D."/>
            <person name="Rose D.J."/>
            <person name="Mayhew G.F."/>
            <person name="Evans P.S."/>
            <person name="Gregor J."/>
            <person name="Kirkpatrick H.A."/>
            <person name="Posfai G."/>
            <person name="Hackett J."/>
            <person name="Klink S."/>
            <person name="Boutin A."/>
            <person name="Shao Y."/>
            <person name="Miller L."/>
            <person name="Grotbeck E.J."/>
            <person name="Davis N.W."/>
            <person name="Lim A."/>
            <person name="Dimalanta E.T."/>
            <person name="Potamousis K."/>
            <person name="Apodaca J."/>
            <person name="Anantharaman T.S."/>
            <person name="Lin J."/>
            <person name="Yen G."/>
            <person name="Schwartz D.C."/>
            <person name="Welch R.A."/>
            <person name="Blattner F.R."/>
        </authorList>
    </citation>
    <scope>NUCLEOTIDE SEQUENCE [LARGE SCALE GENOMIC DNA]</scope>
    <source>
        <strain>O157:H7 / EDL933 / ATCC 700927 / EHEC</strain>
    </source>
</reference>
<reference key="2">
    <citation type="journal article" date="2001" name="DNA Res.">
        <title>Complete genome sequence of enterohemorrhagic Escherichia coli O157:H7 and genomic comparison with a laboratory strain K-12.</title>
        <authorList>
            <person name="Hayashi T."/>
            <person name="Makino K."/>
            <person name="Ohnishi M."/>
            <person name="Kurokawa K."/>
            <person name="Ishii K."/>
            <person name="Yokoyama K."/>
            <person name="Han C.-G."/>
            <person name="Ohtsubo E."/>
            <person name="Nakayama K."/>
            <person name="Murata T."/>
            <person name="Tanaka M."/>
            <person name="Tobe T."/>
            <person name="Iida T."/>
            <person name="Takami H."/>
            <person name="Honda T."/>
            <person name="Sasakawa C."/>
            <person name="Ogasawara N."/>
            <person name="Yasunaga T."/>
            <person name="Kuhara S."/>
            <person name="Shiba T."/>
            <person name="Hattori M."/>
            <person name="Shinagawa H."/>
        </authorList>
    </citation>
    <scope>NUCLEOTIDE SEQUENCE [LARGE SCALE GENOMIC DNA]</scope>
    <source>
        <strain>O157:H7 / Sakai / RIMD 0509952 / EHEC</strain>
    </source>
</reference>